<sequence>MNPVIKKFQFGQSTVTLETGRIARQASGAVLVTVDDDVSVLVTVVGAKTADPSKGFFPLSVHYQEKTYAAGKIPGGFFKREARPSEKETLTSRLIDRPIRPLFPEGFQNEVQVICTVVSTSKKTDPDIAAMIGTSAALAVSGIPFDGPIGAARVAFHPETGYLLNPNYEQLKASSLDMVVAGTKDAVLMVESEAKELTEDQMLGAVLFAHDEFQAVIKAVEELAAEAGKPRWDWTAPQANTALLDAIRSEFGAAISEAYTITIKQQRYARLDELREQVVAKFSGEEGQPSGGEVKDAFGEIEYRTVRENIVNGKPRIDGRDTRTVRPLAIEVGVLDKTHGSALFTRGETQALVVATLGTARDAQLLDTLEGEKKDAFMLHYNFPPYSVGECGRMGATGRREIGHGRLARRGVAAMLPSADEFPYTIRVVSEITESNGSSSMASVCGASLALMDAGVPMKAPVAGIAMGLVKEGEKFAVLTDILGDEDHLGDMDFKVAGTAKGVTALQMDIKIQGITEEIMEIALGQALEARLNILGQMSQVIAQSRSELSANAPTMLAMKIDQDKIRDVIGKGGATIRAICEETKASIDIEDDGSIKIFGETKEAAEAAKQRVLSITAEAEIGKIYVGKVERIVDFGAFVNILPGKDGLVHISQISDQRIEKVTDVLKEGQEVKVLVLDVDNRGRIKLSIKDVAAAEASGV</sequence>
<dbReference type="EC" id="2.7.7.8" evidence="1"/>
<dbReference type="EMBL" id="CP000304">
    <property type="protein sequence ID" value="ABP80937.1"/>
    <property type="molecule type" value="Genomic_DNA"/>
</dbReference>
<dbReference type="RefSeq" id="WP_011914368.1">
    <property type="nucleotide sequence ID" value="NC_009434.1"/>
</dbReference>
<dbReference type="SMR" id="A4VPN6"/>
<dbReference type="KEGG" id="psa:PST_3306"/>
<dbReference type="eggNOG" id="COG1185">
    <property type="taxonomic scope" value="Bacteria"/>
</dbReference>
<dbReference type="HOGENOM" id="CLU_004217_2_2_6"/>
<dbReference type="Proteomes" id="UP000000233">
    <property type="component" value="Chromosome"/>
</dbReference>
<dbReference type="GO" id="GO:0005829">
    <property type="term" value="C:cytosol"/>
    <property type="evidence" value="ECO:0007669"/>
    <property type="project" value="TreeGrafter"/>
</dbReference>
<dbReference type="GO" id="GO:0000175">
    <property type="term" value="F:3'-5'-RNA exonuclease activity"/>
    <property type="evidence" value="ECO:0007669"/>
    <property type="project" value="TreeGrafter"/>
</dbReference>
<dbReference type="GO" id="GO:0000287">
    <property type="term" value="F:magnesium ion binding"/>
    <property type="evidence" value="ECO:0007669"/>
    <property type="project" value="UniProtKB-UniRule"/>
</dbReference>
<dbReference type="GO" id="GO:0004654">
    <property type="term" value="F:polyribonucleotide nucleotidyltransferase activity"/>
    <property type="evidence" value="ECO:0007669"/>
    <property type="project" value="UniProtKB-UniRule"/>
</dbReference>
<dbReference type="GO" id="GO:0003723">
    <property type="term" value="F:RNA binding"/>
    <property type="evidence" value="ECO:0007669"/>
    <property type="project" value="UniProtKB-UniRule"/>
</dbReference>
<dbReference type="GO" id="GO:0006402">
    <property type="term" value="P:mRNA catabolic process"/>
    <property type="evidence" value="ECO:0007669"/>
    <property type="project" value="UniProtKB-UniRule"/>
</dbReference>
<dbReference type="GO" id="GO:0006396">
    <property type="term" value="P:RNA processing"/>
    <property type="evidence" value="ECO:0007669"/>
    <property type="project" value="InterPro"/>
</dbReference>
<dbReference type="CDD" id="cd02393">
    <property type="entry name" value="KH-I_PNPase"/>
    <property type="match status" value="1"/>
</dbReference>
<dbReference type="CDD" id="cd11363">
    <property type="entry name" value="RNase_PH_PNPase_1"/>
    <property type="match status" value="1"/>
</dbReference>
<dbReference type="CDD" id="cd11364">
    <property type="entry name" value="RNase_PH_PNPase_2"/>
    <property type="match status" value="1"/>
</dbReference>
<dbReference type="CDD" id="cd04472">
    <property type="entry name" value="S1_PNPase"/>
    <property type="match status" value="1"/>
</dbReference>
<dbReference type="FunFam" id="2.40.50.140:FF:000023">
    <property type="entry name" value="Polyribonucleotide nucleotidyltransferase"/>
    <property type="match status" value="1"/>
</dbReference>
<dbReference type="FunFam" id="3.30.1370.10:FF:000001">
    <property type="entry name" value="Polyribonucleotide nucleotidyltransferase"/>
    <property type="match status" value="1"/>
</dbReference>
<dbReference type="FunFam" id="3.30.230.70:FF:000001">
    <property type="entry name" value="Polyribonucleotide nucleotidyltransferase"/>
    <property type="match status" value="1"/>
</dbReference>
<dbReference type="FunFam" id="3.30.230.70:FF:000002">
    <property type="entry name" value="Polyribonucleotide nucleotidyltransferase"/>
    <property type="match status" value="1"/>
</dbReference>
<dbReference type="Gene3D" id="3.30.230.70">
    <property type="entry name" value="GHMP Kinase, N-terminal domain"/>
    <property type="match status" value="2"/>
</dbReference>
<dbReference type="Gene3D" id="3.30.1370.10">
    <property type="entry name" value="K Homology domain, type 1"/>
    <property type="match status" value="1"/>
</dbReference>
<dbReference type="Gene3D" id="2.40.50.140">
    <property type="entry name" value="Nucleic acid-binding proteins"/>
    <property type="match status" value="1"/>
</dbReference>
<dbReference type="HAMAP" id="MF_01595">
    <property type="entry name" value="PNPase"/>
    <property type="match status" value="1"/>
</dbReference>
<dbReference type="InterPro" id="IPR001247">
    <property type="entry name" value="ExoRNase_PH_dom1"/>
</dbReference>
<dbReference type="InterPro" id="IPR015847">
    <property type="entry name" value="ExoRNase_PH_dom2"/>
</dbReference>
<dbReference type="InterPro" id="IPR036345">
    <property type="entry name" value="ExoRNase_PH_dom2_sf"/>
</dbReference>
<dbReference type="InterPro" id="IPR004087">
    <property type="entry name" value="KH_dom"/>
</dbReference>
<dbReference type="InterPro" id="IPR004088">
    <property type="entry name" value="KH_dom_type_1"/>
</dbReference>
<dbReference type="InterPro" id="IPR036612">
    <property type="entry name" value="KH_dom_type_1_sf"/>
</dbReference>
<dbReference type="InterPro" id="IPR012340">
    <property type="entry name" value="NA-bd_OB-fold"/>
</dbReference>
<dbReference type="InterPro" id="IPR012162">
    <property type="entry name" value="PNPase"/>
</dbReference>
<dbReference type="InterPro" id="IPR027408">
    <property type="entry name" value="PNPase/RNase_PH_dom_sf"/>
</dbReference>
<dbReference type="InterPro" id="IPR015848">
    <property type="entry name" value="PNPase_PH_RNA-bd_bac/org-type"/>
</dbReference>
<dbReference type="InterPro" id="IPR020568">
    <property type="entry name" value="Ribosomal_Su5_D2-typ_SF"/>
</dbReference>
<dbReference type="InterPro" id="IPR003029">
    <property type="entry name" value="S1_domain"/>
</dbReference>
<dbReference type="NCBIfam" id="TIGR03591">
    <property type="entry name" value="polynuc_phos"/>
    <property type="match status" value="1"/>
</dbReference>
<dbReference type="NCBIfam" id="NF008805">
    <property type="entry name" value="PRK11824.1"/>
    <property type="match status" value="1"/>
</dbReference>
<dbReference type="PANTHER" id="PTHR11252">
    <property type="entry name" value="POLYRIBONUCLEOTIDE NUCLEOTIDYLTRANSFERASE"/>
    <property type="match status" value="1"/>
</dbReference>
<dbReference type="PANTHER" id="PTHR11252:SF0">
    <property type="entry name" value="POLYRIBONUCLEOTIDE NUCLEOTIDYLTRANSFERASE 1, MITOCHONDRIAL"/>
    <property type="match status" value="1"/>
</dbReference>
<dbReference type="Pfam" id="PF00013">
    <property type="entry name" value="KH_1"/>
    <property type="match status" value="1"/>
</dbReference>
<dbReference type="Pfam" id="PF03726">
    <property type="entry name" value="PNPase"/>
    <property type="match status" value="1"/>
</dbReference>
<dbReference type="Pfam" id="PF01138">
    <property type="entry name" value="RNase_PH"/>
    <property type="match status" value="2"/>
</dbReference>
<dbReference type="Pfam" id="PF03725">
    <property type="entry name" value="RNase_PH_C"/>
    <property type="match status" value="2"/>
</dbReference>
<dbReference type="Pfam" id="PF00575">
    <property type="entry name" value="S1"/>
    <property type="match status" value="1"/>
</dbReference>
<dbReference type="PIRSF" id="PIRSF005499">
    <property type="entry name" value="PNPase"/>
    <property type="match status" value="1"/>
</dbReference>
<dbReference type="SMART" id="SM00322">
    <property type="entry name" value="KH"/>
    <property type="match status" value="1"/>
</dbReference>
<dbReference type="SMART" id="SM00316">
    <property type="entry name" value="S1"/>
    <property type="match status" value="1"/>
</dbReference>
<dbReference type="SUPFAM" id="SSF54791">
    <property type="entry name" value="Eukaryotic type KH-domain (KH-domain type I)"/>
    <property type="match status" value="1"/>
</dbReference>
<dbReference type="SUPFAM" id="SSF50249">
    <property type="entry name" value="Nucleic acid-binding proteins"/>
    <property type="match status" value="1"/>
</dbReference>
<dbReference type="SUPFAM" id="SSF55666">
    <property type="entry name" value="Ribonuclease PH domain 2-like"/>
    <property type="match status" value="2"/>
</dbReference>
<dbReference type="SUPFAM" id="SSF54211">
    <property type="entry name" value="Ribosomal protein S5 domain 2-like"/>
    <property type="match status" value="2"/>
</dbReference>
<dbReference type="PROSITE" id="PS50084">
    <property type="entry name" value="KH_TYPE_1"/>
    <property type="match status" value="1"/>
</dbReference>
<dbReference type="PROSITE" id="PS50126">
    <property type="entry name" value="S1"/>
    <property type="match status" value="1"/>
</dbReference>
<comment type="function">
    <text evidence="1">Involved in mRNA degradation. Catalyzes the phosphorolysis of single-stranded polyribonucleotides processively in the 3'- to 5'-direction.</text>
</comment>
<comment type="catalytic activity">
    <reaction evidence="1">
        <text>RNA(n+1) + phosphate = RNA(n) + a ribonucleoside 5'-diphosphate</text>
        <dbReference type="Rhea" id="RHEA:22096"/>
        <dbReference type="Rhea" id="RHEA-COMP:14527"/>
        <dbReference type="Rhea" id="RHEA-COMP:17342"/>
        <dbReference type="ChEBI" id="CHEBI:43474"/>
        <dbReference type="ChEBI" id="CHEBI:57930"/>
        <dbReference type="ChEBI" id="CHEBI:140395"/>
        <dbReference type="EC" id="2.7.7.8"/>
    </reaction>
</comment>
<comment type="cofactor">
    <cofactor evidence="1">
        <name>Mg(2+)</name>
        <dbReference type="ChEBI" id="CHEBI:18420"/>
    </cofactor>
</comment>
<comment type="subunit">
    <text evidence="1">Component of the RNA degradosome, which is a multiprotein complex involved in RNA processing and mRNA degradation.</text>
</comment>
<comment type="subcellular location">
    <subcellularLocation>
        <location evidence="1">Cytoplasm</location>
    </subcellularLocation>
</comment>
<comment type="similarity">
    <text evidence="1">Belongs to the polyribonucleotide nucleotidyltransferase family.</text>
</comment>
<organism>
    <name type="scientific">Stutzerimonas stutzeri (strain A1501)</name>
    <name type="common">Pseudomonas stutzeri</name>
    <dbReference type="NCBI Taxonomy" id="379731"/>
    <lineage>
        <taxon>Bacteria</taxon>
        <taxon>Pseudomonadati</taxon>
        <taxon>Pseudomonadota</taxon>
        <taxon>Gammaproteobacteria</taxon>
        <taxon>Pseudomonadales</taxon>
        <taxon>Pseudomonadaceae</taxon>
        <taxon>Stutzerimonas</taxon>
    </lineage>
</organism>
<protein>
    <recommendedName>
        <fullName evidence="1">Polyribonucleotide nucleotidyltransferase</fullName>
        <ecNumber evidence="1">2.7.7.8</ecNumber>
    </recommendedName>
    <alternativeName>
        <fullName evidence="1">Polynucleotide phosphorylase</fullName>
        <shortName evidence="1">PNPase</shortName>
    </alternativeName>
</protein>
<accession>A4VPN6</accession>
<keyword id="KW-0963">Cytoplasm</keyword>
<keyword id="KW-0460">Magnesium</keyword>
<keyword id="KW-0479">Metal-binding</keyword>
<keyword id="KW-0548">Nucleotidyltransferase</keyword>
<keyword id="KW-1185">Reference proteome</keyword>
<keyword id="KW-0694">RNA-binding</keyword>
<keyword id="KW-0808">Transferase</keyword>
<gene>
    <name evidence="1" type="primary">pnp</name>
    <name type="ordered locus">PST_3306</name>
</gene>
<feature type="chain" id="PRO_0000329786" description="Polyribonucleotide nucleotidyltransferase">
    <location>
        <begin position="1"/>
        <end position="701"/>
    </location>
</feature>
<feature type="domain" description="KH" evidence="1">
    <location>
        <begin position="554"/>
        <end position="613"/>
    </location>
</feature>
<feature type="domain" description="S1 motif" evidence="1">
    <location>
        <begin position="623"/>
        <end position="691"/>
    </location>
</feature>
<feature type="binding site" evidence="1">
    <location>
        <position position="487"/>
    </location>
    <ligand>
        <name>Mg(2+)</name>
        <dbReference type="ChEBI" id="CHEBI:18420"/>
    </ligand>
</feature>
<feature type="binding site" evidence="1">
    <location>
        <position position="493"/>
    </location>
    <ligand>
        <name>Mg(2+)</name>
        <dbReference type="ChEBI" id="CHEBI:18420"/>
    </ligand>
</feature>
<evidence type="ECO:0000255" key="1">
    <source>
        <dbReference type="HAMAP-Rule" id="MF_01595"/>
    </source>
</evidence>
<reference key="1">
    <citation type="journal article" date="2008" name="Proc. Natl. Acad. Sci. U.S.A.">
        <title>Nitrogen fixation island and rhizosphere competence traits in the genome of root-associated Pseudomonas stutzeri A1501.</title>
        <authorList>
            <person name="Yan Y."/>
            <person name="Yang J."/>
            <person name="Dou Y."/>
            <person name="Chen M."/>
            <person name="Ping S."/>
            <person name="Peng J."/>
            <person name="Lu W."/>
            <person name="Zhang W."/>
            <person name="Yao Z."/>
            <person name="Li H."/>
            <person name="Liu W."/>
            <person name="He S."/>
            <person name="Geng L."/>
            <person name="Zhang X."/>
            <person name="Yang F."/>
            <person name="Yu H."/>
            <person name="Zhan Y."/>
            <person name="Li D."/>
            <person name="Lin Z."/>
            <person name="Wang Y."/>
            <person name="Elmerich C."/>
            <person name="Lin M."/>
            <person name="Jin Q."/>
        </authorList>
    </citation>
    <scope>NUCLEOTIDE SEQUENCE [LARGE SCALE GENOMIC DNA]</scope>
    <source>
        <strain>A1501</strain>
    </source>
</reference>
<proteinExistence type="inferred from homology"/>
<name>PNP_STUS1</name>